<gene>
    <name evidence="1" type="primary">rpsB</name>
    <name type="ordered locus">Ent638_0707</name>
</gene>
<protein>
    <recommendedName>
        <fullName evidence="1">Small ribosomal subunit protein uS2</fullName>
    </recommendedName>
    <alternativeName>
        <fullName evidence="2">30S ribosomal protein S2</fullName>
    </alternativeName>
</protein>
<dbReference type="EMBL" id="CP000653">
    <property type="protein sequence ID" value="ABP59394.1"/>
    <property type="molecule type" value="Genomic_DNA"/>
</dbReference>
<dbReference type="RefSeq" id="WP_012016115.1">
    <property type="nucleotide sequence ID" value="NC_009436.1"/>
</dbReference>
<dbReference type="SMR" id="A4W6R4"/>
<dbReference type="STRING" id="399742.Ent638_0707"/>
<dbReference type="GeneID" id="93307881"/>
<dbReference type="KEGG" id="ent:Ent638_0707"/>
<dbReference type="eggNOG" id="COG0052">
    <property type="taxonomic scope" value="Bacteria"/>
</dbReference>
<dbReference type="HOGENOM" id="CLU_040318_1_0_6"/>
<dbReference type="OrthoDB" id="9808036at2"/>
<dbReference type="Proteomes" id="UP000000230">
    <property type="component" value="Chromosome"/>
</dbReference>
<dbReference type="GO" id="GO:0022627">
    <property type="term" value="C:cytosolic small ribosomal subunit"/>
    <property type="evidence" value="ECO:0007669"/>
    <property type="project" value="TreeGrafter"/>
</dbReference>
<dbReference type="GO" id="GO:0003735">
    <property type="term" value="F:structural constituent of ribosome"/>
    <property type="evidence" value="ECO:0007669"/>
    <property type="project" value="InterPro"/>
</dbReference>
<dbReference type="GO" id="GO:0006412">
    <property type="term" value="P:translation"/>
    <property type="evidence" value="ECO:0007669"/>
    <property type="project" value="UniProtKB-UniRule"/>
</dbReference>
<dbReference type="CDD" id="cd01425">
    <property type="entry name" value="RPS2"/>
    <property type="match status" value="1"/>
</dbReference>
<dbReference type="FunFam" id="1.10.287.610:FF:000001">
    <property type="entry name" value="30S ribosomal protein S2"/>
    <property type="match status" value="1"/>
</dbReference>
<dbReference type="Gene3D" id="3.40.50.10490">
    <property type="entry name" value="Glucose-6-phosphate isomerase like protein, domain 1"/>
    <property type="match status" value="1"/>
</dbReference>
<dbReference type="Gene3D" id="1.10.287.610">
    <property type="entry name" value="Helix hairpin bin"/>
    <property type="match status" value="1"/>
</dbReference>
<dbReference type="HAMAP" id="MF_00291_B">
    <property type="entry name" value="Ribosomal_uS2_B"/>
    <property type="match status" value="1"/>
</dbReference>
<dbReference type="InterPro" id="IPR001865">
    <property type="entry name" value="Ribosomal_uS2"/>
</dbReference>
<dbReference type="InterPro" id="IPR005706">
    <property type="entry name" value="Ribosomal_uS2_bac/mit/plastid"/>
</dbReference>
<dbReference type="InterPro" id="IPR018130">
    <property type="entry name" value="Ribosomal_uS2_CS"/>
</dbReference>
<dbReference type="InterPro" id="IPR023591">
    <property type="entry name" value="Ribosomal_uS2_flav_dom_sf"/>
</dbReference>
<dbReference type="NCBIfam" id="TIGR01011">
    <property type="entry name" value="rpsB_bact"/>
    <property type="match status" value="1"/>
</dbReference>
<dbReference type="PANTHER" id="PTHR12534">
    <property type="entry name" value="30S RIBOSOMAL PROTEIN S2 PROKARYOTIC AND ORGANELLAR"/>
    <property type="match status" value="1"/>
</dbReference>
<dbReference type="PANTHER" id="PTHR12534:SF0">
    <property type="entry name" value="SMALL RIBOSOMAL SUBUNIT PROTEIN US2M"/>
    <property type="match status" value="1"/>
</dbReference>
<dbReference type="Pfam" id="PF00318">
    <property type="entry name" value="Ribosomal_S2"/>
    <property type="match status" value="1"/>
</dbReference>
<dbReference type="PRINTS" id="PR00395">
    <property type="entry name" value="RIBOSOMALS2"/>
</dbReference>
<dbReference type="SUPFAM" id="SSF52313">
    <property type="entry name" value="Ribosomal protein S2"/>
    <property type="match status" value="1"/>
</dbReference>
<dbReference type="PROSITE" id="PS00962">
    <property type="entry name" value="RIBOSOMAL_S2_1"/>
    <property type="match status" value="1"/>
</dbReference>
<dbReference type="PROSITE" id="PS00963">
    <property type="entry name" value="RIBOSOMAL_S2_2"/>
    <property type="match status" value="1"/>
</dbReference>
<reference key="1">
    <citation type="journal article" date="2010" name="PLoS Genet.">
        <title>Genome sequence of the plant growth promoting endophytic bacterium Enterobacter sp. 638.</title>
        <authorList>
            <person name="Taghavi S."/>
            <person name="van der Lelie D."/>
            <person name="Hoffman A."/>
            <person name="Zhang Y.B."/>
            <person name="Walla M.D."/>
            <person name="Vangronsveld J."/>
            <person name="Newman L."/>
            <person name="Monchy S."/>
        </authorList>
    </citation>
    <scope>NUCLEOTIDE SEQUENCE [LARGE SCALE GENOMIC DNA]</scope>
    <source>
        <strain>638</strain>
    </source>
</reference>
<name>RS2_ENT38</name>
<evidence type="ECO:0000255" key="1">
    <source>
        <dbReference type="HAMAP-Rule" id="MF_00291"/>
    </source>
</evidence>
<evidence type="ECO:0000305" key="2"/>
<comment type="similarity">
    <text evidence="1">Belongs to the universal ribosomal protein uS2 family.</text>
</comment>
<proteinExistence type="inferred from homology"/>
<keyword id="KW-0687">Ribonucleoprotein</keyword>
<keyword id="KW-0689">Ribosomal protein</keyword>
<sequence length="241" mass="26715">MATVSMRDMLKAGVHFGHQTRYWNPKMKPFIFGARNKVHIINLEKTVPMFNEALAELSKISSRKGKILFVGTKRAASEAVKDAANNCDQFFVNHRWLGGMLTNWKTVRQSIKRLKDLEIQSQDGTFDKLTKKEALMRTRELAKLENSLGGIKDMGGLPDALFVIDADHEHIAIKEANNLGIPVFAIVDTNSDPDGVDFVIPGNDDAIRAVTLYLGAVAATVREGRSQDLASQAEESFVEAE</sequence>
<accession>A4W6R4</accession>
<feature type="chain" id="PRO_1000059261" description="Small ribosomal subunit protein uS2">
    <location>
        <begin position="1"/>
        <end position="241"/>
    </location>
</feature>
<organism>
    <name type="scientific">Enterobacter sp. (strain 638)</name>
    <dbReference type="NCBI Taxonomy" id="399742"/>
    <lineage>
        <taxon>Bacteria</taxon>
        <taxon>Pseudomonadati</taxon>
        <taxon>Pseudomonadota</taxon>
        <taxon>Gammaproteobacteria</taxon>
        <taxon>Enterobacterales</taxon>
        <taxon>Enterobacteriaceae</taxon>
        <taxon>Enterobacter</taxon>
    </lineage>
</organism>